<proteinExistence type="evidence at protein level"/>
<sequence length="11" mass="1103">GSSGLISMPRV</sequence>
<name>PVK2_LOBDE</name>
<comment type="function">
    <text evidence="4">Mediates visceral muscle contractile activity (myotropic activity).</text>
</comment>
<comment type="subcellular location">
    <subcellularLocation>
        <location evidence="4">Secreted</location>
    </subcellularLocation>
</comment>
<comment type="similarity">
    <text evidence="1">Belongs to the periviscerokinin family.</text>
</comment>
<protein>
    <recommendedName>
        <fullName evidence="3">Periviscerokinin-2</fullName>
        <shortName evidence="3">LobDe-PVK-2</shortName>
    </recommendedName>
</protein>
<reference evidence="4" key="1">
    <citation type="journal article" date="2009" name="BMC Evol. Biol.">
        <title>A proteomic approach for studying insect phylogeny: CAPA peptides of ancient insect taxa (Dictyoptera, Blattoptera) as a test case.</title>
        <authorList>
            <person name="Roth S."/>
            <person name="Fromm B."/>
            <person name="Gaede G."/>
            <person name="Predel R."/>
        </authorList>
    </citation>
    <scope>PROTEIN SEQUENCE</scope>
    <scope>AMIDATION AT VAL-11</scope>
    <source>
        <tissue evidence="2">Abdominal perisympathetic organs</tissue>
    </source>
</reference>
<evidence type="ECO:0000255" key="1"/>
<evidence type="ECO:0000269" key="2">
    <source>
    </source>
</evidence>
<evidence type="ECO:0000303" key="3">
    <source>
    </source>
</evidence>
<evidence type="ECO:0000305" key="4"/>
<feature type="peptide" id="PRO_0000378795" description="Periviscerokinin-2" evidence="2">
    <location>
        <begin position="1"/>
        <end position="11"/>
    </location>
</feature>
<feature type="modified residue" description="Valine amide" evidence="2">
    <location>
        <position position="11"/>
    </location>
</feature>
<accession>P85657</accession>
<keyword id="KW-0027">Amidation</keyword>
<keyword id="KW-0903">Direct protein sequencing</keyword>
<keyword id="KW-0527">Neuropeptide</keyword>
<keyword id="KW-0964">Secreted</keyword>
<organism>
    <name type="scientific">Loboptera decipiens</name>
    <name type="common">Field cockroach</name>
    <dbReference type="NCBI Taxonomy" id="242713"/>
    <lineage>
        <taxon>Eukaryota</taxon>
        <taxon>Metazoa</taxon>
        <taxon>Ecdysozoa</taxon>
        <taxon>Arthropoda</taxon>
        <taxon>Hexapoda</taxon>
        <taxon>Insecta</taxon>
        <taxon>Pterygota</taxon>
        <taxon>Neoptera</taxon>
        <taxon>Polyneoptera</taxon>
        <taxon>Dictyoptera</taxon>
        <taxon>Blattodea</taxon>
        <taxon>Blaberoidea</taxon>
        <taxon>Blattellidae</taxon>
        <taxon>Loboptera</taxon>
    </lineage>
</organism>
<dbReference type="GO" id="GO:0005576">
    <property type="term" value="C:extracellular region"/>
    <property type="evidence" value="ECO:0007669"/>
    <property type="project" value="UniProtKB-SubCell"/>
</dbReference>
<dbReference type="GO" id="GO:0007218">
    <property type="term" value="P:neuropeptide signaling pathway"/>
    <property type="evidence" value="ECO:0007669"/>
    <property type="project" value="UniProtKB-KW"/>
</dbReference>
<dbReference type="InterPro" id="IPR013231">
    <property type="entry name" value="Periviscerokinin"/>
</dbReference>
<dbReference type="Pfam" id="PF08259">
    <property type="entry name" value="Periviscerokin"/>
    <property type="match status" value="1"/>
</dbReference>